<feature type="signal peptide" evidence="2">
    <location>
        <begin position="1"/>
        <end position="26"/>
    </location>
</feature>
<feature type="propeptide" id="PRO_0000021328" description="Removed in mature form" evidence="3">
    <location>
        <begin position="27"/>
        <end position="57"/>
    </location>
</feature>
<feature type="chain" id="PRO_0000021329" description="Gamma-interferon-inducible lysosomal thiol reductase">
    <location>
        <begin position="58"/>
        <end position="232"/>
    </location>
</feature>
<feature type="propeptide" id="PRO_0000021330" description="Removed in mature form" evidence="3">
    <location>
        <begin position="233"/>
        <end position="250"/>
    </location>
</feature>
<feature type="glycosylation site" description="N-linked (GlcNAc...) asparagine" evidence="2">
    <location>
        <position position="63"/>
    </location>
</feature>
<feature type="glycosylation site" description="N-linked (GlcNAc...) asparagine" evidence="2">
    <location>
        <position position="95"/>
    </location>
</feature>
<feature type="glycosylation site" description="N-linked (GlcNAc...) asparagine" evidence="2">
    <location>
        <position position="108"/>
    </location>
</feature>
<feature type="disulfide bond" description="Redox-active" evidence="3 4">
    <location>
        <begin position="72"/>
        <end position="75"/>
    </location>
</feature>
<feature type="mutagenesis site" description="Abolishes reducing activity, does not affect dimerization. Abolishes reducing activity; when associated with S-75." evidence="3 4">
    <original>C</original>
    <variation>S</variation>
    <location>
        <position position="72"/>
    </location>
</feature>
<feature type="mutagenesis site" description="Abolishes reducing activity, does not affect dimerization. Abolishes reducing activity; when associated with S-72." evidence="3 4">
    <original>C</original>
    <variation>S</variation>
    <location>
        <position position="75"/>
    </location>
</feature>
<feature type="sequence conflict" description="In Ref. 7; AAH31020." evidence="6" ref="7">
    <original>R</original>
    <variation>Q</variation>
    <location>
        <position position="76"/>
    </location>
</feature>
<feature type="sequence conflict" description="In Ref. 1; AAA36105." evidence="6" ref="1">
    <original>L</original>
    <variation>S</variation>
    <location>
        <position position="98"/>
    </location>
</feature>
<feature type="sequence conflict" description="In Ref. 1; AAA36105." evidence="6" ref="1">
    <original>H</original>
    <variation>L</variation>
    <location>
        <position position="119"/>
    </location>
</feature>
<feature type="sequence conflict" description="In Ref. 1; AAA36105." evidence="6" ref="1">
    <original>C</original>
    <variation>WHG</variation>
    <location>
        <position position="148"/>
    </location>
</feature>
<feature type="sequence conflict" description="In Ref. 3; BAC98466." evidence="6" ref="3">
    <original>T</original>
    <variation>A</variation>
    <location>
        <position position="223"/>
    </location>
</feature>
<organism>
    <name type="scientific">Homo sapiens</name>
    <name type="common">Human</name>
    <dbReference type="NCBI Taxonomy" id="9606"/>
    <lineage>
        <taxon>Eukaryota</taxon>
        <taxon>Metazoa</taxon>
        <taxon>Chordata</taxon>
        <taxon>Craniata</taxon>
        <taxon>Vertebrata</taxon>
        <taxon>Euteleostomi</taxon>
        <taxon>Mammalia</taxon>
        <taxon>Eutheria</taxon>
        <taxon>Euarchontoglires</taxon>
        <taxon>Primates</taxon>
        <taxon>Haplorrhini</taxon>
        <taxon>Catarrhini</taxon>
        <taxon>Hominidae</taxon>
        <taxon>Homo</taxon>
    </lineage>
</organism>
<proteinExistence type="evidence at protein level"/>
<comment type="function">
    <text evidence="1">Lysosomal thiol reductase that can reduce protein disulfide bonds. May facilitate the complete unfolding of proteins destined for lysosomal degradation. Plays an important role in antigen processing. Facilitates the generation of MHC class II-restricted epitodes from disulfide bond-containing antigen by the endocytic reduction of disulfide bonds (By similarity). Also facilitates MHC class I-restricted recognition of exogenous antigens containing disulfide bonds by CD8+ T-cells or crosspresentation (By similarity).</text>
</comment>
<comment type="biophysicochemical properties">
    <kinetics>
        <KM evidence="3">1200 uM for F(ab')2 fragment when denatured</KM>
        <KM evidence="3">10 uM for F(ab')2 fragment</KM>
        <text>Kinetic parameters shown are for mature enzyme.</text>
    </kinetics>
    <phDependence>
        <text evidence="3">Optimum pH is 4-5.</text>
    </phDependence>
</comment>
<comment type="subunit">
    <text evidence="4 5">Dimer; disulfide-linked.</text>
</comment>
<comment type="interaction">
    <interactant intactId="EBI-2868897">
        <id>P13284</id>
    </interactant>
    <interactant intactId="EBI-739863">
        <id>Q9BQ66</id>
        <label>KRTAP4-12</label>
    </interactant>
    <organismsDiffer>false</organismsDiffer>
    <experiments>3</experiments>
</comment>
<comment type="interaction">
    <interactant intactId="EBI-2868897">
        <id>P13284</id>
    </interactant>
    <interactant intactId="EBI-945833">
        <id>Q7Z3S9</id>
        <label>NOTCH2NLA</label>
    </interactant>
    <organismsDiffer>false</organismsDiffer>
    <experiments>3</experiments>
</comment>
<comment type="interaction">
    <interactant intactId="EBI-2868897">
        <id>P13284</id>
    </interactant>
    <interactant intactId="EBI-2562368">
        <id>P22735</id>
        <label>TGM1</label>
    </interactant>
    <organismsDiffer>false</organismsDiffer>
    <experiments>3</experiments>
</comment>
<comment type="subcellular location">
    <subcellularLocation>
        <location evidence="3 5">Secreted</location>
    </subcellularLocation>
    <subcellularLocation>
        <location evidence="3 5">Lysosome</location>
    </subcellularLocation>
</comment>
<comment type="induction">
    <text evidence="5">Expressed constitutively in antigen-presenting cells and induced by IFN-gamma in other cell types.</text>
</comment>
<comment type="PTM">
    <text evidence="3 4">N-glycosylated. Sugar chains contain mannose-6-phosphate.</text>
</comment>
<comment type="PTM">
    <text>Synthesized as a 35 kDa precursor which is then processed into the mature 30 kDa form via cleavage of N-terminal and C-terminal propeptides. Processing of the precursor is mediated by multiple lysosomal proteases.</text>
</comment>
<comment type="miscellaneous">
    <text>Both precursor form and mature form have thiol reductase activity.</text>
</comment>
<comment type="similarity">
    <text evidence="6">Belongs to the GILT family.</text>
</comment>
<comment type="sequence caution" evidence="6">
    <conflict type="erroneous termination">
        <sequence resource="EMBL-CDS" id="AAA36105"/>
    </conflict>
    <text>Extended C-terminus.</text>
</comment>
<comment type="sequence caution" evidence="6">
    <conflict type="frameshift">
        <sequence resource="EMBL-CDS" id="AAA36105"/>
    </conflict>
</comment>
<comment type="sequence caution" evidence="6">
    <conflict type="miscellaneous discrepancy">
        <sequence resource="EMBL-CDS" id="AAA36105"/>
    </conflict>
    <text>Chimeric cDNA. N-terminal sequence identical to a region of chromosome 11.</text>
</comment>
<comment type="sequence caution" evidence="6">
    <conflict type="miscellaneous discrepancy">
        <sequence resource="EMBL-CDS" id="AAF04618"/>
    </conflict>
    <text>Chimeric cDNA. N-terminal sequence identical to a region of chromosome 11.</text>
</comment>
<dbReference type="EC" id="1.8.-.-" evidence="3 4"/>
<dbReference type="EMBL" id="J03909">
    <property type="protein sequence ID" value="AAA36105.1"/>
    <property type="status" value="ALT_SEQ"/>
    <property type="molecule type" value="mRNA"/>
</dbReference>
<dbReference type="EMBL" id="AF097362">
    <property type="protein sequence ID" value="AAF04618.1"/>
    <property type="status" value="ALT_SEQ"/>
    <property type="molecule type" value="mRNA"/>
</dbReference>
<dbReference type="EMBL" id="AB049659">
    <property type="protein sequence ID" value="BAC98466.1"/>
    <property type="molecule type" value="mRNA"/>
</dbReference>
<dbReference type="EMBL" id="AC007192">
    <property type="status" value="NOT_ANNOTATED_CDS"/>
    <property type="molecule type" value="Genomic_DNA"/>
</dbReference>
<dbReference type="EMBL" id="AC093080">
    <property type="status" value="NOT_ANNOTATED_CDS"/>
    <property type="molecule type" value="Genomic_DNA"/>
</dbReference>
<dbReference type="EMBL" id="AC068499">
    <property type="status" value="NOT_ANNOTATED_CDS"/>
    <property type="molecule type" value="Genomic_DNA"/>
</dbReference>
<dbReference type="EMBL" id="CH471106">
    <property type="protein sequence ID" value="EAW84662.1"/>
    <property type="molecule type" value="Genomic_DNA"/>
</dbReference>
<dbReference type="EMBL" id="BC021136">
    <property type="protein sequence ID" value="AAH21136.1"/>
    <property type="molecule type" value="mRNA"/>
</dbReference>
<dbReference type="EMBL" id="BC031020">
    <property type="protein sequence ID" value="AAH31020.1"/>
    <property type="molecule type" value="mRNA"/>
</dbReference>
<dbReference type="CCDS" id="CCDS46015.1"/>
<dbReference type="PIR" id="A43708">
    <property type="entry name" value="A43708"/>
</dbReference>
<dbReference type="RefSeq" id="NP_006323.2">
    <property type="nucleotide sequence ID" value="NM_006332.4"/>
</dbReference>
<dbReference type="SMR" id="P13284"/>
<dbReference type="BioGRID" id="115704">
    <property type="interactions" value="87"/>
</dbReference>
<dbReference type="FunCoup" id="P13284">
    <property type="interactions" value="415"/>
</dbReference>
<dbReference type="IntAct" id="P13284">
    <property type="interactions" value="55"/>
</dbReference>
<dbReference type="MINT" id="P13284"/>
<dbReference type="STRING" id="9606.ENSP00000384886"/>
<dbReference type="GlyConnect" id="1262">
    <property type="glycosylation" value="18 N-Linked glycans (2 sites)"/>
</dbReference>
<dbReference type="GlyCosmos" id="P13284">
    <property type="glycosylation" value="3 sites, 17 glycans"/>
</dbReference>
<dbReference type="GlyGen" id="P13284">
    <property type="glycosylation" value="6 sites, 25 N-linked glycans (3 sites), 1 O-linked glycan (1 site)"/>
</dbReference>
<dbReference type="iPTMnet" id="P13284"/>
<dbReference type="PhosphoSitePlus" id="P13284"/>
<dbReference type="BioMuta" id="IFI30"/>
<dbReference type="DMDM" id="327478582"/>
<dbReference type="jPOST" id="P13284"/>
<dbReference type="MassIVE" id="P13284"/>
<dbReference type="PaxDb" id="9606-ENSP00000384886"/>
<dbReference type="PeptideAtlas" id="P13284"/>
<dbReference type="ProteomicsDB" id="52905"/>
<dbReference type="Pumba" id="P13284"/>
<dbReference type="Antibodypedia" id="27932">
    <property type="antibodies" value="168 antibodies from 29 providers"/>
</dbReference>
<dbReference type="DNASU" id="10437"/>
<dbReference type="Ensembl" id="ENST00000407280.4">
    <property type="protein sequence ID" value="ENSP00000384886.1"/>
    <property type="gene ID" value="ENSG00000216490.4"/>
</dbReference>
<dbReference type="GeneID" id="10437"/>
<dbReference type="KEGG" id="hsa:10437"/>
<dbReference type="MANE-Select" id="ENST00000407280.4">
    <property type="protein sequence ID" value="ENSP00000384886.1"/>
    <property type="RefSeq nucleotide sequence ID" value="NM_006332.5"/>
    <property type="RefSeq protein sequence ID" value="NP_006323.2"/>
</dbReference>
<dbReference type="UCSC" id="uc002nic.3">
    <property type="organism name" value="human"/>
</dbReference>
<dbReference type="AGR" id="HGNC:5398"/>
<dbReference type="CTD" id="10437"/>
<dbReference type="DisGeNET" id="10437"/>
<dbReference type="GeneCards" id="IFI30"/>
<dbReference type="HGNC" id="HGNC:5398">
    <property type="gene designation" value="IFI30"/>
</dbReference>
<dbReference type="HPA" id="ENSG00000216490">
    <property type="expression patterns" value="Tissue enhanced (lung, lymphoid tissue)"/>
</dbReference>
<dbReference type="MIM" id="604664">
    <property type="type" value="gene"/>
</dbReference>
<dbReference type="neXtProt" id="NX_P13284"/>
<dbReference type="OpenTargets" id="ENSG00000216490"/>
<dbReference type="PharmGKB" id="PA29644"/>
<dbReference type="VEuPathDB" id="HostDB:ENSG00000216490"/>
<dbReference type="eggNOG" id="KOG3160">
    <property type="taxonomic scope" value="Eukaryota"/>
</dbReference>
<dbReference type="GeneTree" id="ENSGT00390000010450"/>
<dbReference type="HOGENOM" id="CLU_066886_0_1_1"/>
<dbReference type="InParanoid" id="P13284"/>
<dbReference type="OMA" id="SHKEVCF"/>
<dbReference type="OrthoDB" id="958254at2759"/>
<dbReference type="PAN-GO" id="P13284">
    <property type="GO annotations" value="2 GO annotations based on evolutionary models"/>
</dbReference>
<dbReference type="PhylomeDB" id="P13284"/>
<dbReference type="TreeFam" id="TF315141"/>
<dbReference type="PathwayCommons" id="P13284"/>
<dbReference type="Reactome" id="R-HSA-2132295">
    <property type="pathway name" value="MHC class II antigen presentation"/>
</dbReference>
<dbReference type="Reactome" id="R-HSA-877300">
    <property type="pathway name" value="Interferon gamma signaling"/>
</dbReference>
<dbReference type="SignaLink" id="P13284"/>
<dbReference type="SIGNOR" id="P13284"/>
<dbReference type="BioGRID-ORCS" id="10437">
    <property type="hits" value="20 hits in 1160 CRISPR screens"/>
</dbReference>
<dbReference type="ChiTaRS" id="IFI30">
    <property type="organism name" value="human"/>
</dbReference>
<dbReference type="GeneWiki" id="IFI30"/>
<dbReference type="GenomeRNAi" id="10437"/>
<dbReference type="Pharos" id="P13284">
    <property type="development level" value="Tbio"/>
</dbReference>
<dbReference type="PRO" id="PR:P13284"/>
<dbReference type="Proteomes" id="UP000005640">
    <property type="component" value="Chromosome 19"/>
</dbReference>
<dbReference type="RNAct" id="P13284">
    <property type="molecule type" value="protein"/>
</dbReference>
<dbReference type="Bgee" id="ENSG00000216490">
    <property type="expression patterns" value="Expressed in monocyte and 96 other cell types or tissues"/>
</dbReference>
<dbReference type="ExpressionAtlas" id="P13284">
    <property type="expression patterns" value="baseline and differential"/>
</dbReference>
<dbReference type="GO" id="GO:0030054">
    <property type="term" value="C:cell junction"/>
    <property type="evidence" value="ECO:0000314"/>
    <property type="project" value="HPA"/>
</dbReference>
<dbReference type="GO" id="GO:0005829">
    <property type="term" value="C:cytosol"/>
    <property type="evidence" value="ECO:0000314"/>
    <property type="project" value="HPA"/>
</dbReference>
<dbReference type="GO" id="GO:0005576">
    <property type="term" value="C:extracellular region"/>
    <property type="evidence" value="ECO:0000304"/>
    <property type="project" value="ProtInc"/>
</dbReference>
<dbReference type="GO" id="GO:0043231">
    <property type="term" value="C:intracellular membrane-bounded organelle"/>
    <property type="evidence" value="ECO:0000314"/>
    <property type="project" value="HPA"/>
</dbReference>
<dbReference type="GO" id="GO:0043202">
    <property type="term" value="C:lysosomal lumen"/>
    <property type="evidence" value="ECO:0000304"/>
    <property type="project" value="Reactome"/>
</dbReference>
<dbReference type="GO" id="GO:0005764">
    <property type="term" value="C:lysosome"/>
    <property type="evidence" value="ECO:0000314"/>
    <property type="project" value="UniProtKB"/>
</dbReference>
<dbReference type="GO" id="GO:0016667">
    <property type="term" value="F:oxidoreductase activity, acting on a sulfur group of donors"/>
    <property type="evidence" value="ECO:0000315"/>
    <property type="project" value="UniProtKB"/>
</dbReference>
<dbReference type="GO" id="GO:0016671">
    <property type="term" value="F:oxidoreductase activity, acting on a sulfur group of donors, disulfide as acceptor"/>
    <property type="evidence" value="ECO:0007669"/>
    <property type="project" value="InterPro"/>
</dbReference>
<dbReference type="GO" id="GO:0042590">
    <property type="term" value="P:antigen processing and presentation of exogenous peptide antigen via MHC class I"/>
    <property type="evidence" value="ECO:0000250"/>
    <property type="project" value="UniProtKB"/>
</dbReference>
<dbReference type="GO" id="GO:0019886">
    <property type="term" value="P:antigen processing and presentation of exogenous peptide antigen via MHC class II"/>
    <property type="evidence" value="ECO:0000304"/>
    <property type="project" value="Reactome"/>
</dbReference>
<dbReference type="GO" id="GO:0048147">
    <property type="term" value="P:negative regulation of fibroblast proliferation"/>
    <property type="evidence" value="ECO:0007669"/>
    <property type="project" value="Ensembl"/>
</dbReference>
<dbReference type="GO" id="GO:0050821">
    <property type="term" value="P:protein stabilization"/>
    <property type="evidence" value="ECO:0007669"/>
    <property type="project" value="Ensembl"/>
</dbReference>
<dbReference type="InterPro" id="IPR004911">
    <property type="entry name" value="Interferon-induced_GILT"/>
</dbReference>
<dbReference type="PANTHER" id="PTHR13234">
    <property type="entry name" value="GAMMA-INTERFERON INDUCIBLE LYSOSOMAL THIOL REDUCTASE GILT"/>
    <property type="match status" value="1"/>
</dbReference>
<dbReference type="PANTHER" id="PTHR13234:SF8">
    <property type="entry name" value="GAMMA-INTERFERON-INDUCIBLE LYSOSOMAL THIOL REDUCTASE"/>
    <property type="match status" value="1"/>
</dbReference>
<dbReference type="Pfam" id="PF03227">
    <property type="entry name" value="GILT"/>
    <property type="match status" value="1"/>
</dbReference>
<keyword id="KW-0903">Direct protein sequencing</keyword>
<keyword id="KW-1015">Disulfide bond</keyword>
<keyword id="KW-0325">Glycoprotein</keyword>
<keyword id="KW-0391">Immunity</keyword>
<keyword id="KW-0458">Lysosome</keyword>
<keyword id="KW-0560">Oxidoreductase</keyword>
<keyword id="KW-1267">Proteomics identification</keyword>
<keyword id="KW-0676">Redox-active center</keyword>
<keyword id="KW-1185">Reference proteome</keyword>
<keyword id="KW-0964">Secreted</keyword>
<keyword id="KW-0732">Signal</keyword>
<name>GILT_HUMAN</name>
<accession>P13284</accession>
<accession>Q76MF9</accession>
<accession>Q8NEI4</accession>
<accession>Q8WU77</accession>
<accession>Q9UL08</accession>
<gene>
    <name type="primary">IFI30</name>
    <name type="synonym">GILT</name>
    <name type="synonym">IP30</name>
</gene>
<evidence type="ECO:0000250" key="1"/>
<evidence type="ECO:0000255" key="2"/>
<evidence type="ECO:0000269" key="3">
    <source>
    </source>
</evidence>
<evidence type="ECO:0000269" key="4">
    <source>
    </source>
</evidence>
<evidence type="ECO:0000269" key="5">
    <source>
    </source>
</evidence>
<evidence type="ECO:0000305" key="6"/>
<sequence length="250" mass="27964">MTLSPLLLFLPPLLLLLDVPTAAVQASPLQALDFFGNGPPVNYKTGNLYLRGPLKKSNAPLVNVTLYYEALCGGCRAFLIRELFPTWLLVMEILNVTLVPYGNAQEQNVSGRWEFKCQHGEEECKFNKVEACVLDELDMELAFLTIVCMEEFEDMERSLPLCLQLYAPGLSPDTIMECAMGDRGMQLMHANAQRTDALQPPHEYVPWVTVNGKPLEDQTQLLTLVCQLYQGKKPDVCPSSTSSLRSVCFK</sequence>
<protein>
    <recommendedName>
        <fullName>Gamma-interferon-inducible lysosomal thiol reductase</fullName>
        <ecNumber evidence="3 4">1.8.-.-</ecNumber>
    </recommendedName>
    <alternativeName>
        <fullName>Gamma-interferon-inducible protein IP-30</fullName>
    </alternativeName>
    <alternativeName>
        <fullName>Legumaturain</fullName>
    </alternativeName>
</protein>
<reference key="1">
    <citation type="journal article" date="1988" name="J. Biol. Chem.">
        <title>Molecular and biochemical characterization of a novel gamma-interferon-inducible protein.</title>
        <authorList>
            <person name="Luster A.D."/>
            <person name="Weinshank R.L."/>
            <person name="Feinman R."/>
            <person name="Ravetch J.V."/>
        </authorList>
    </citation>
    <scope>NUCLEOTIDE SEQUENCE [MRNA]</scope>
    <scope>INDUCTION</scope>
    <scope>SUBCELLULAR LOCATION</scope>
    <scope>SUBUNIT</scope>
</reference>
<reference key="2">
    <citation type="journal article" date="2000" name="Proc. Natl. Acad. Sci. U.S.A.">
        <title>Enzymatic reduction of disulfide bonds in lysosomes: characterization of a gamma-interferon-inducible lysosomal thiol reductase (GILT).</title>
        <authorList>
            <person name="Arunachalam B."/>
            <person name="Phan U.T."/>
            <person name="Geuze H.J."/>
            <person name="Cresswell P."/>
        </authorList>
    </citation>
    <scope>NUCLEOTIDE SEQUENCE [MRNA]</scope>
    <scope>SUBCELLULAR LOCATION</scope>
    <scope>CATALYTIC ACTIVITY</scope>
    <scope>BIOPHYSICOCHEMICAL PROPERTIES</scope>
    <scope>IDENTIFICATION BY MASS SPECTROMETRY</scope>
    <scope>PROTEIN SEQUENCE OF N-TERMINUS</scope>
    <scope>GLYCOSYLATION</scope>
    <scope>MUTAGENESIS OF CYS-72 AND CYS-75</scope>
</reference>
<reference key="3">
    <citation type="submission" date="2000-10" db="EMBL/GenBank/DDBJ databases">
        <title>A novel Asn-bond specific endoproteolytic enzyme from Human.</title>
        <authorList>
            <person name="Arahira M."/>
            <person name="Fukazawa C."/>
        </authorList>
    </citation>
    <scope>NUCLEOTIDE SEQUENCE [MRNA]</scope>
</reference>
<reference key="4">
    <citation type="journal article" date="2004" name="Nat. Genet.">
        <title>Complete sequencing and characterization of 21,243 full-length human cDNAs.</title>
        <authorList>
            <person name="Ota T."/>
            <person name="Suzuki Y."/>
            <person name="Nishikawa T."/>
            <person name="Otsuki T."/>
            <person name="Sugiyama T."/>
            <person name="Irie R."/>
            <person name="Wakamatsu A."/>
            <person name="Hayashi K."/>
            <person name="Sato H."/>
            <person name="Nagai K."/>
            <person name="Kimura K."/>
            <person name="Makita H."/>
            <person name="Sekine M."/>
            <person name="Obayashi M."/>
            <person name="Nishi T."/>
            <person name="Shibahara T."/>
            <person name="Tanaka T."/>
            <person name="Ishii S."/>
            <person name="Yamamoto J."/>
            <person name="Saito K."/>
            <person name="Kawai Y."/>
            <person name="Isono Y."/>
            <person name="Nakamura Y."/>
            <person name="Nagahari K."/>
            <person name="Murakami K."/>
            <person name="Yasuda T."/>
            <person name="Iwayanagi T."/>
            <person name="Wagatsuma M."/>
            <person name="Shiratori A."/>
            <person name="Sudo H."/>
            <person name="Hosoiri T."/>
            <person name="Kaku Y."/>
            <person name="Kodaira H."/>
            <person name="Kondo H."/>
            <person name="Sugawara M."/>
            <person name="Takahashi M."/>
            <person name="Kanda K."/>
            <person name="Yokoi T."/>
            <person name="Furuya T."/>
            <person name="Kikkawa E."/>
            <person name="Omura Y."/>
            <person name="Abe K."/>
            <person name="Kamihara K."/>
            <person name="Katsuta N."/>
            <person name="Sato K."/>
            <person name="Tanikawa M."/>
            <person name="Yamazaki M."/>
            <person name="Ninomiya K."/>
            <person name="Ishibashi T."/>
            <person name="Yamashita H."/>
            <person name="Murakawa K."/>
            <person name="Fujimori K."/>
            <person name="Tanai H."/>
            <person name="Kimata M."/>
            <person name="Watanabe M."/>
            <person name="Hiraoka S."/>
            <person name="Chiba Y."/>
            <person name="Ishida S."/>
            <person name="Ono Y."/>
            <person name="Takiguchi S."/>
            <person name="Watanabe S."/>
            <person name="Yosida M."/>
            <person name="Hotuta T."/>
            <person name="Kusano J."/>
            <person name="Kanehori K."/>
            <person name="Takahashi-Fujii A."/>
            <person name="Hara H."/>
            <person name="Tanase T.-O."/>
            <person name="Nomura Y."/>
            <person name="Togiya S."/>
            <person name="Komai F."/>
            <person name="Hara R."/>
            <person name="Takeuchi K."/>
            <person name="Arita M."/>
            <person name="Imose N."/>
            <person name="Musashino K."/>
            <person name="Yuuki H."/>
            <person name="Oshima A."/>
            <person name="Sasaki N."/>
            <person name="Aotsuka S."/>
            <person name="Yoshikawa Y."/>
            <person name="Matsunawa H."/>
            <person name="Ichihara T."/>
            <person name="Shiohata N."/>
            <person name="Sano S."/>
            <person name="Moriya S."/>
            <person name="Momiyama H."/>
            <person name="Satoh N."/>
            <person name="Takami S."/>
            <person name="Terashima Y."/>
            <person name="Suzuki O."/>
            <person name="Nakagawa S."/>
            <person name="Senoh A."/>
            <person name="Mizoguchi H."/>
            <person name="Goto Y."/>
            <person name="Shimizu F."/>
            <person name="Wakebe H."/>
            <person name="Hishigaki H."/>
            <person name="Watanabe T."/>
            <person name="Sugiyama A."/>
            <person name="Takemoto M."/>
            <person name="Kawakami B."/>
            <person name="Yamazaki M."/>
            <person name="Watanabe K."/>
            <person name="Kumagai A."/>
            <person name="Itakura S."/>
            <person name="Fukuzumi Y."/>
            <person name="Fujimori Y."/>
            <person name="Komiyama M."/>
            <person name="Tashiro H."/>
            <person name="Tanigami A."/>
            <person name="Fujiwara T."/>
            <person name="Ono T."/>
            <person name="Yamada K."/>
            <person name="Fujii Y."/>
            <person name="Ozaki K."/>
            <person name="Hirao M."/>
            <person name="Ohmori Y."/>
            <person name="Kawabata A."/>
            <person name="Hikiji T."/>
            <person name="Kobatake N."/>
            <person name="Inagaki H."/>
            <person name="Ikema Y."/>
            <person name="Okamoto S."/>
            <person name="Okitani R."/>
            <person name="Kawakami T."/>
            <person name="Noguchi S."/>
            <person name="Itoh T."/>
            <person name="Shigeta K."/>
            <person name="Senba T."/>
            <person name="Matsumura K."/>
            <person name="Nakajima Y."/>
            <person name="Mizuno T."/>
            <person name="Morinaga M."/>
            <person name="Sasaki M."/>
            <person name="Togashi T."/>
            <person name="Oyama M."/>
            <person name="Hata H."/>
            <person name="Watanabe M."/>
            <person name="Komatsu T."/>
            <person name="Mizushima-Sugano J."/>
            <person name="Satoh T."/>
            <person name="Shirai Y."/>
            <person name="Takahashi Y."/>
            <person name="Nakagawa K."/>
            <person name="Okumura K."/>
            <person name="Nagase T."/>
            <person name="Nomura N."/>
            <person name="Kikuchi H."/>
            <person name="Masuho Y."/>
            <person name="Yamashita R."/>
            <person name="Nakai K."/>
            <person name="Yada T."/>
            <person name="Nakamura Y."/>
            <person name="Ohara O."/>
            <person name="Isogai T."/>
            <person name="Sugano S."/>
        </authorList>
    </citation>
    <scope>NUCLEOTIDE SEQUENCE [LARGE SCALE MRNA]</scope>
    <source>
        <tissue>Placenta</tissue>
    </source>
</reference>
<reference key="5">
    <citation type="journal article" date="2004" name="Nature">
        <title>The DNA sequence and biology of human chromosome 19.</title>
        <authorList>
            <person name="Grimwood J."/>
            <person name="Gordon L.A."/>
            <person name="Olsen A.S."/>
            <person name="Terry A."/>
            <person name="Schmutz J."/>
            <person name="Lamerdin J.E."/>
            <person name="Hellsten U."/>
            <person name="Goodstein D."/>
            <person name="Couronne O."/>
            <person name="Tran-Gyamfi M."/>
            <person name="Aerts A."/>
            <person name="Altherr M."/>
            <person name="Ashworth L."/>
            <person name="Bajorek E."/>
            <person name="Black S."/>
            <person name="Branscomb E."/>
            <person name="Caenepeel S."/>
            <person name="Carrano A.V."/>
            <person name="Caoile C."/>
            <person name="Chan Y.M."/>
            <person name="Christensen M."/>
            <person name="Cleland C.A."/>
            <person name="Copeland A."/>
            <person name="Dalin E."/>
            <person name="Dehal P."/>
            <person name="Denys M."/>
            <person name="Detter J.C."/>
            <person name="Escobar J."/>
            <person name="Flowers D."/>
            <person name="Fotopulos D."/>
            <person name="Garcia C."/>
            <person name="Georgescu A.M."/>
            <person name="Glavina T."/>
            <person name="Gomez M."/>
            <person name="Gonzales E."/>
            <person name="Groza M."/>
            <person name="Hammon N."/>
            <person name="Hawkins T."/>
            <person name="Haydu L."/>
            <person name="Ho I."/>
            <person name="Huang W."/>
            <person name="Israni S."/>
            <person name="Jett J."/>
            <person name="Kadner K."/>
            <person name="Kimball H."/>
            <person name="Kobayashi A."/>
            <person name="Larionov V."/>
            <person name="Leem S.-H."/>
            <person name="Lopez F."/>
            <person name="Lou Y."/>
            <person name="Lowry S."/>
            <person name="Malfatti S."/>
            <person name="Martinez D."/>
            <person name="McCready P.M."/>
            <person name="Medina C."/>
            <person name="Morgan J."/>
            <person name="Nelson K."/>
            <person name="Nolan M."/>
            <person name="Ovcharenko I."/>
            <person name="Pitluck S."/>
            <person name="Pollard M."/>
            <person name="Popkie A.P."/>
            <person name="Predki P."/>
            <person name="Quan G."/>
            <person name="Ramirez L."/>
            <person name="Rash S."/>
            <person name="Retterer J."/>
            <person name="Rodriguez A."/>
            <person name="Rogers S."/>
            <person name="Salamov A."/>
            <person name="Salazar A."/>
            <person name="She X."/>
            <person name="Smith D."/>
            <person name="Slezak T."/>
            <person name="Solovyev V."/>
            <person name="Thayer N."/>
            <person name="Tice H."/>
            <person name="Tsai M."/>
            <person name="Ustaszewska A."/>
            <person name="Vo N."/>
            <person name="Wagner M."/>
            <person name="Wheeler J."/>
            <person name="Wu K."/>
            <person name="Xie G."/>
            <person name="Yang J."/>
            <person name="Dubchak I."/>
            <person name="Furey T.S."/>
            <person name="DeJong P."/>
            <person name="Dickson M."/>
            <person name="Gordon D."/>
            <person name="Eichler E.E."/>
            <person name="Pennacchio L.A."/>
            <person name="Richardson P."/>
            <person name="Stubbs L."/>
            <person name="Rokhsar D.S."/>
            <person name="Myers R.M."/>
            <person name="Rubin E.M."/>
            <person name="Lucas S.M."/>
        </authorList>
    </citation>
    <scope>NUCLEOTIDE SEQUENCE [LARGE SCALE GENOMIC DNA]</scope>
</reference>
<reference key="6">
    <citation type="submission" date="2005-07" db="EMBL/GenBank/DDBJ databases">
        <authorList>
            <person name="Mural R.J."/>
            <person name="Istrail S."/>
            <person name="Sutton G.G."/>
            <person name="Florea L."/>
            <person name="Halpern A.L."/>
            <person name="Mobarry C.M."/>
            <person name="Lippert R."/>
            <person name="Walenz B."/>
            <person name="Shatkay H."/>
            <person name="Dew I."/>
            <person name="Miller J.R."/>
            <person name="Flanigan M.J."/>
            <person name="Edwards N.J."/>
            <person name="Bolanos R."/>
            <person name="Fasulo D."/>
            <person name="Halldorsson B.V."/>
            <person name="Hannenhalli S."/>
            <person name="Turner R."/>
            <person name="Yooseph S."/>
            <person name="Lu F."/>
            <person name="Nusskern D.R."/>
            <person name="Shue B.C."/>
            <person name="Zheng X.H."/>
            <person name="Zhong F."/>
            <person name="Delcher A.L."/>
            <person name="Huson D.H."/>
            <person name="Kravitz S.A."/>
            <person name="Mouchard L."/>
            <person name="Reinert K."/>
            <person name="Remington K.A."/>
            <person name="Clark A.G."/>
            <person name="Waterman M.S."/>
            <person name="Eichler E.E."/>
            <person name="Adams M.D."/>
            <person name="Hunkapiller M.W."/>
            <person name="Myers E.W."/>
            <person name="Venter J.C."/>
        </authorList>
    </citation>
    <scope>NUCLEOTIDE SEQUENCE [LARGE SCALE GENOMIC DNA]</scope>
</reference>
<reference key="7">
    <citation type="journal article" date="2004" name="Genome Res.">
        <title>The status, quality, and expansion of the NIH full-length cDNA project: the Mammalian Gene Collection (MGC).</title>
        <authorList>
            <consortium name="The MGC Project Team"/>
        </authorList>
    </citation>
    <scope>NUCLEOTIDE SEQUENCE [LARGE SCALE MRNA]</scope>
    <source>
        <tissue>Skin</tissue>
    </source>
</reference>
<reference key="8">
    <citation type="journal article" date="2000" name="J. Biol. Chem.">
        <title>Gamma-interferon-inducible lysosomal thiol reductase (GILT). Maturation, activity, and mechanism of action.</title>
        <authorList>
            <person name="Phan U.T."/>
            <person name="Arunachalam B."/>
            <person name="Cresswell P."/>
        </authorList>
    </citation>
    <scope>SUBUNIT</scope>
    <scope>CATALYTIC ACTIVITY</scope>
    <scope>MUTAGENESIS OF CYS-72 AND CYS-75</scope>
    <scope>GLYCOSYLATION</scope>
</reference>
<reference key="9">
    <citation type="journal article" date="2011" name="BMC Syst. Biol.">
        <title>Initial characterization of the human central proteome.</title>
        <authorList>
            <person name="Burkard T.R."/>
            <person name="Planyavsky M."/>
            <person name="Kaupe I."/>
            <person name="Breitwieser F.P."/>
            <person name="Buerckstuemmer T."/>
            <person name="Bennett K.L."/>
            <person name="Superti-Furga G."/>
            <person name="Colinge J."/>
        </authorList>
    </citation>
    <scope>IDENTIFICATION BY MASS SPECTROMETRY [LARGE SCALE ANALYSIS]</scope>
</reference>
<reference key="10">
    <citation type="journal article" date="2014" name="J. Proteomics">
        <title>An enzyme assisted RP-RPLC approach for in-depth analysis of human liver phosphoproteome.</title>
        <authorList>
            <person name="Bian Y."/>
            <person name="Song C."/>
            <person name="Cheng K."/>
            <person name="Dong M."/>
            <person name="Wang F."/>
            <person name="Huang J."/>
            <person name="Sun D."/>
            <person name="Wang L."/>
            <person name="Ye M."/>
            <person name="Zou H."/>
        </authorList>
    </citation>
    <scope>IDENTIFICATION BY MASS SPECTROMETRY [LARGE SCALE ANALYSIS]</scope>
    <source>
        <tissue>Liver</tissue>
    </source>
</reference>
<reference key="11">
    <citation type="journal article" date="2015" name="Proteomics">
        <title>N-terminome analysis of the human mitochondrial proteome.</title>
        <authorList>
            <person name="Vaca Jacome A.S."/>
            <person name="Rabilloud T."/>
            <person name="Schaeffer-Reiss C."/>
            <person name="Rompais M."/>
            <person name="Ayoub D."/>
            <person name="Lane L."/>
            <person name="Bairoch A."/>
            <person name="Van Dorsselaer A."/>
            <person name="Carapito C."/>
        </authorList>
    </citation>
    <scope>IDENTIFICATION BY MASS SPECTROMETRY [LARGE SCALE ANALYSIS]</scope>
</reference>